<evidence type="ECO:0000250" key="1">
    <source>
        <dbReference type="UniProtKB" id="I1MRZ6"/>
    </source>
</evidence>
<evidence type="ECO:0000250" key="2">
    <source>
        <dbReference type="UniProtKB" id="Q9C5W0"/>
    </source>
</evidence>
<evidence type="ECO:0000256" key="3">
    <source>
        <dbReference type="SAM" id="MobiDB-lite"/>
    </source>
</evidence>
<evidence type="ECO:0000269" key="4">
    <source>
    </source>
</evidence>
<evidence type="ECO:0000303" key="5">
    <source>
    </source>
</evidence>
<evidence type="ECO:0000305" key="6"/>
<evidence type="ECO:0000312" key="7">
    <source>
        <dbReference type="EMBL" id="KRH19466.1"/>
    </source>
</evidence>
<comment type="function">
    <text evidence="1">Involved in triacylglycerol (TAG) biosynthesis (By similarity). Catalyzes the acylation of the sn-3 hydroxy group of sn-1,2-diacylglycerol using acyl-CoA (By similarity).</text>
</comment>
<comment type="catalytic activity">
    <reaction evidence="1">
        <text>an acyl-CoA + a 1,2-diacyl-sn-glycerol = a triacyl-sn-glycerol + CoA</text>
        <dbReference type="Rhea" id="RHEA:10868"/>
        <dbReference type="ChEBI" id="CHEBI:17815"/>
        <dbReference type="ChEBI" id="CHEBI:57287"/>
        <dbReference type="ChEBI" id="CHEBI:58342"/>
        <dbReference type="ChEBI" id="CHEBI:64615"/>
        <dbReference type="EC" id="2.3.1.20"/>
    </reaction>
</comment>
<comment type="cofactor">
    <cofactor evidence="2">
        <name>[2Fe-2S] cluster</name>
        <dbReference type="ChEBI" id="CHEBI:190135"/>
    </cofactor>
</comment>
<comment type="pathway">
    <text evidence="1">Glycerolipid metabolism; triacylglycerol biosynthesis.</text>
</comment>
<comment type="subcellular location">
    <subcellularLocation>
        <location evidence="1">Cytoplasm</location>
    </subcellularLocation>
</comment>
<comment type="tissue specificity">
    <text evidence="4">Expressed at low levels in stems, leaves, flowers, pods and seeds, and barely in roots.</text>
</comment>
<comment type="similarity">
    <text evidence="6">Belongs to the diacylglycerol acyltransferase family.</text>
</comment>
<sequence length="327" mass="34733">MEISGSVLRQLSYVSGYGTPTRSRGVASRVGLRMGTGSGFCDEGHLQYYQDTKKILTPKKLKLLKGFSKLGLASDPEKLAMFHDLQQNLTSDAGEVLLRELEAARAKEKEMKKKRKQEIKAKLKASKMNCESSSSSSSESSDSDGDCDQVVDMNCFRAGAGVVVPAPVEESPLPKTPIVEDTNAKAHRDAMALCSKNDISVSSVRDCIKSESAVVTAAPQKRIEVCMGTKCKRSGAAALMQEFERVVGVEGGAVVSCKCMGKCKTAPNVKVQNSVDHSLARGLDDSVNIPANPLCIGVGLGDVDAIVARFLGESHTDIGMIGAATAT</sequence>
<gene>
    <name evidence="5" type="primary">DGAT3-1</name>
    <name evidence="7" type="ORF">GLYMA_13G118300</name>
</gene>
<name>DAT31_SOYBN</name>
<reference key="1">
    <citation type="journal article" date="2010" name="Nature">
        <title>Genome sequence of the palaeopolyploid soybean.</title>
        <authorList>
            <person name="Schmutz J."/>
            <person name="Cannon S.B."/>
            <person name="Schlueter J."/>
            <person name="Ma J."/>
            <person name="Mitros T."/>
            <person name="Nelson W."/>
            <person name="Hyten D.L."/>
            <person name="Song Q."/>
            <person name="Thelen J.J."/>
            <person name="Cheng J."/>
            <person name="Xu D."/>
            <person name="Hellsten U."/>
            <person name="May G.D."/>
            <person name="Yu Y."/>
            <person name="Sakurai T."/>
            <person name="Umezawa T."/>
            <person name="Bhattacharyya M.K."/>
            <person name="Sandhu D."/>
            <person name="Valliyodan B."/>
            <person name="Lindquist E."/>
            <person name="Peto M."/>
            <person name="Grant D."/>
            <person name="Shu S."/>
            <person name="Goodstein D."/>
            <person name="Barry K."/>
            <person name="Futrell-Griggs M."/>
            <person name="Abernathy B."/>
            <person name="Du J."/>
            <person name="Tian Z."/>
            <person name="Zhu L."/>
            <person name="Gill N."/>
            <person name="Joshi T."/>
            <person name="Libault M."/>
            <person name="Sethuraman A."/>
            <person name="Zhang X.-C."/>
            <person name="Shinozaki K."/>
            <person name="Nguyen H.T."/>
            <person name="Wing R.A."/>
            <person name="Cregan P."/>
            <person name="Specht J."/>
            <person name="Grimwood J."/>
            <person name="Rokhsar D."/>
            <person name="Stacey G."/>
            <person name="Shoemaker R.C."/>
            <person name="Jackson S.A."/>
        </authorList>
    </citation>
    <scope>NUCLEOTIDE SEQUENCE [LARGE SCALE GENOMIC DNA]</scope>
    <source>
        <strain>cv. Williams 82</strain>
        <tissue>Callus</tissue>
    </source>
</reference>
<reference key="2">
    <citation type="journal article" date="2022" name="Front. Plant Sci.">
        <title>Functional characterization of soybean diacylglycerol acyltransferase 3 in yeast and soybean.</title>
        <authorList>
            <person name="Xue J."/>
            <person name="Gao H."/>
            <person name="Xue Y."/>
            <person name="Shi R."/>
            <person name="Liu M."/>
            <person name="Han L."/>
            <person name="Gao Y."/>
            <person name="Zhou Y."/>
            <person name="Zhang F."/>
            <person name="Zhang H."/>
            <person name="Jia X."/>
            <person name="Li R."/>
        </authorList>
    </citation>
    <scope>TISSUE SPECIFICITY</scope>
    <source>
        <strain>cv. Jack</strain>
    </source>
</reference>
<organism>
    <name type="scientific">Glycine max</name>
    <name type="common">Soybean</name>
    <name type="synonym">Glycine hispida</name>
    <dbReference type="NCBI Taxonomy" id="3847"/>
    <lineage>
        <taxon>Eukaryota</taxon>
        <taxon>Viridiplantae</taxon>
        <taxon>Streptophyta</taxon>
        <taxon>Embryophyta</taxon>
        <taxon>Tracheophyta</taxon>
        <taxon>Spermatophyta</taxon>
        <taxon>Magnoliopsida</taxon>
        <taxon>eudicotyledons</taxon>
        <taxon>Gunneridae</taxon>
        <taxon>Pentapetalae</taxon>
        <taxon>rosids</taxon>
        <taxon>fabids</taxon>
        <taxon>Fabales</taxon>
        <taxon>Fabaceae</taxon>
        <taxon>Papilionoideae</taxon>
        <taxon>50 kb inversion clade</taxon>
        <taxon>NPAAA clade</taxon>
        <taxon>indigoferoid/millettioid clade</taxon>
        <taxon>Phaseoleae</taxon>
        <taxon>Glycine</taxon>
        <taxon>Glycine subgen. Soja</taxon>
    </lineage>
</organism>
<proteinExistence type="evidence at transcript level"/>
<protein>
    <recommendedName>
        <fullName evidence="5">Diacylglycerol O-acyltransferase 3-1</fullName>
        <shortName evidence="5">GmDGAT3-1</shortName>
        <ecNumber evidence="2">2.3.1.20</ecNumber>
    </recommendedName>
</protein>
<feature type="chain" id="PRO_0000457896" description="Diacylglycerol O-acyltransferase 3-1">
    <location>
        <begin position="1"/>
        <end position="327"/>
    </location>
</feature>
<feature type="region of interest" description="Disordered" evidence="3">
    <location>
        <begin position="108"/>
        <end position="146"/>
    </location>
</feature>
<feature type="compositionally biased region" description="Basic residues" evidence="3">
    <location>
        <begin position="112"/>
        <end position="125"/>
    </location>
</feature>
<feature type="compositionally biased region" description="Low complexity" evidence="3">
    <location>
        <begin position="131"/>
        <end position="140"/>
    </location>
</feature>
<feature type="binding site" evidence="2">
    <location>
        <position position="226"/>
    </location>
    <ligand>
        <name>[2Fe-2S] cluster</name>
        <dbReference type="ChEBI" id="CHEBI:190135"/>
    </ligand>
</feature>
<feature type="binding site" evidence="2">
    <location>
        <position position="231"/>
    </location>
    <ligand>
        <name>[2Fe-2S] cluster</name>
        <dbReference type="ChEBI" id="CHEBI:190135"/>
    </ligand>
</feature>
<feature type="binding site" evidence="2">
    <location>
        <position position="259"/>
    </location>
    <ligand>
        <name>[2Fe-2S] cluster</name>
        <dbReference type="ChEBI" id="CHEBI:190135"/>
    </ligand>
</feature>
<feature type="binding site" evidence="2">
    <location>
        <position position="263"/>
    </location>
    <ligand>
        <name>[2Fe-2S] cluster</name>
        <dbReference type="ChEBI" id="CHEBI:190135"/>
    </ligand>
</feature>
<dbReference type="EC" id="2.3.1.20" evidence="2"/>
<dbReference type="EMBL" id="CM000846">
    <property type="protein sequence ID" value="KRH19466.1"/>
    <property type="molecule type" value="Genomic_DNA"/>
</dbReference>
<dbReference type="RefSeq" id="XP_003542403.1">
    <property type="nucleotide sequence ID" value="XM_003542355.3"/>
</dbReference>
<dbReference type="SMR" id="K7LZ65"/>
<dbReference type="FunCoup" id="K7LZ65">
    <property type="interactions" value="301"/>
</dbReference>
<dbReference type="STRING" id="3847.K7LZ65"/>
<dbReference type="PaxDb" id="3847-GLYMA13G17860.2"/>
<dbReference type="EnsemblPlants" id="KRH19466">
    <property type="protein sequence ID" value="KRH19466"/>
    <property type="gene ID" value="GLYMA_13G118300"/>
</dbReference>
<dbReference type="Gramene" id="KRH19466">
    <property type="protein sequence ID" value="KRH19466"/>
    <property type="gene ID" value="GLYMA_13G118300"/>
</dbReference>
<dbReference type="KEGG" id="gmx:100776407"/>
<dbReference type="eggNOG" id="ENOG502RS12">
    <property type="taxonomic scope" value="Eukaryota"/>
</dbReference>
<dbReference type="HOGENOM" id="CLU_065888_0_0_1"/>
<dbReference type="InParanoid" id="K7LZ65"/>
<dbReference type="OMA" id="KNGPNIR"/>
<dbReference type="OrthoDB" id="913780at2759"/>
<dbReference type="BRENDA" id="2.3.1.20">
    <property type="organism ID" value="2483"/>
</dbReference>
<dbReference type="UniPathway" id="UPA00282"/>
<dbReference type="Proteomes" id="UP000008827">
    <property type="component" value="Chromosome 13"/>
</dbReference>
<dbReference type="GO" id="GO:0005737">
    <property type="term" value="C:cytoplasm"/>
    <property type="evidence" value="ECO:0000250"/>
    <property type="project" value="UniProtKB"/>
</dbReference>
<dbReference type="GO" id="GO:0004144">
    <property type="term" value="F:diacylglycerol O-acyltransferase activity"/>
    <property type="evidence" value="ECO:0000250"/>
    <property type="project" value="UniProtKB"/>
</dbReference>
<dbReference type="GO" id="GO:0051536">
    <property type="term" value="F:iron-sulfur cluster binding"/>
    <property type="evidence" value="ECO:0007669"/>
    <property type="project" value="UniProtKB-KW"/>
</dbReference>
<dbReference type="GO" id="GO:0046872">
    <property type="term" value="F:metal ion binding"/>
    <property type="evidence" value="ECO:0007669"/>
    <property type="project" value="UniProtKB-KW"/>
</dbReference>
<dbReference type="GO" id="GO:0006629">
    <property type="term" value="P:lipid metabolic process"/>
    <property type="evidence" value="ECO:0000250"/>
    <property type="project" value="UniProtKB"/>
</dbReference>
<dbReference type="GO" id="GO:0019432">
    <property type="term" value="P:triglyceride biosynthetic process"/>
    <property type="evidence" value="ECO:0000250"/>
    <property type="project" value="UniProtKB"/>
</dbReference>
<dbReference type="CDD" id="cd02980">
    <property type="entry name" value="TRX_Fd_family"/>
    <property type="match status" value="1"/>
</dbReference>
<dbReference type="Gene3D" id="3.40.30.10">
    <property type="entry name" value="Glutaredoxin"/>
    <property type="match status" value="1"/>
</dbReference>
<dbReference type="InterPro" id="IPR036249">
    <property type="entry name" value="Thioredoxin-like_sf"/>
</dbReference>
<dbReference type="SUPFAM" id="SSF52833">
    <property type="entry name" value="Thioredoxin-like"/>
    <property type="match status" value="1"/>
</dbReference>
<keyword id="KW-0963">Cytoplasm</keyword>
<keyword id="KW-0408">Iron</keyword>
<keyword id="KW-0411">Iron-sulfur</keyword>
<keyword id="KW-0479">Metal-binding</keyword>
<keyword id="KW-1185">Reference proteome</keyword>
<keyword id="KW-0808">Transferase</keyword>
<accession>K7LZ65</accession>